<sequence>MPVITLPDGSQRHYDHAVSPMDVALDIGPGLAKACIAGRVNGELVDACDLIENDAQLSIITAKDEEGLEIIRHSCAHLLGHAIKQLWPHTKMAIGPVIDNGFYYDVDLDRTLTQEDVEALEKRMHELAEKNYDVIKKKVSWHEARETFANRGESYKVSILDENIAHDDKPGLYFHEEYVDMCRGPHVPNMRFCHHFKLMKTAGAYWRGDSNNKMLQRIYGTAWADKKALNAYLQRLEEAAKRDHRKIGKQLDLYHMQEEAPGMVFWHNDGWTIFRELEVFVRSKLKEYQYQEVKGPFMMDRVLWEKTGHWDNYKDAMFTTSSENREYCIKPMNCPGHVQIFNQGLKSYRDLPLRMAEFGSCHRNEPSGSLHGLMRVRGFTQDDAHIFCTEEQIRDEVNGCIRLVYDMYSTFGFEKIVVKLSTRPEKRIGSDEMWDRAEADLAVALEENNIPFEYQLGEGAFYGPKIEFTLYDCLDRAWQCGTVQLDFSLPSRLSASYVGEDNERKVPVMIHRAILGSMERFIGILTEEFAGFFPTWLAPVQVVIMNITDSQSEYVNELTQKLSNAGIRVKADLRNEKIGFKIREHTLRRVPYMLVCGDKEVESGKIAVRTRRGKDLGSMDVNEVIEKLQQEIRSRSLKQLEE</sequence>
<comment type="function">
    <text evidence="1">Catalyzes the attachment of threonine to tRNA(Thr) in a two-step reaction: L-threonine is first activated by ATP to form Thr-AMP and then transferred to the acceptor end of tRNA(Thr). Also edits incorrectly charged L-seryl-tRNA(Thr).</text>
</comment>
<comment type="catalytic activity">
    <reaction evidence="1">
        <text>tRNA(Thr) + L-threonine + ATP = L-threonyl-tRNA(Thr) + AMP + diphosphate + H(+)</text>
        <dbReference type="Rhea" id="RHEA:24624"/>
        <dbReference type="Rhea" id="RHEA-COMP:9670"/>
        <dbReference type="Rhea" id="RHEA-COMP:9704"/>
        <dbReference type="ChEBI" id="CHEBI:15378"/>
        <dbReference type="ChEBI" id="CHEBI:30616"/>
        <dbReference type="ChEBI" id="CHEBI:33019"/>
        <dbReference type="ChEBI" id="CHEBI:57926"/>
        <dbReference type="ChEBI" id="CHEBI:78442"/>
        <dbReference type="ChEBI" id="CHEBI:78534"/>
        <dbReference type="ChEBI" id="CHEBI:456215"/>
        <dbReference type="EC" id="6.1.1.3"/>
    </reaction>
</comment>
<comment type="cofactor">
    <cofactor evidence="1">
        <name>Zn(2+)</name>
        <dbReference type="ChEBI" id="CHEBI:29105"/>
    </cofactor>
    <text evidence="1">Binds 1 zinc ion per subunit.</text>
</comment>
<comment type="subunit">
    <text evidence="1">Homodimer.</text>
</comment>
<comment type="subcellular location">
    <subcellularLocation>
        <location evidence="1">Cytoplasm</location>
    </subcellularLocation>
</comment>
<comment type="domain">
    <text>The C-terminal domain recognizes the anticodon bases but the N-terminal also contributes to the precise recognition of tRNA(Thr) by ThrRS.</text>
</comment>
<comment type="similarity">
    <text evidence="1">Belongs to the class-II aminoacyl-tRNA synthetase family.</text>
</comment>
<name>SYT_ECO57</name>
<gene>
    <name evidence="1" type="primary">thrS</name>
    <name type="ordered locus">Z2748</name>
    <name type="ordered locus">ECs2426</name>
</gene>
<evidence type="ECO:0000255" key="1">
    <source>
        <dbReference type="HAMAP-Rule" id="MF_00184"/>
    </source>
</evidence>
<evidence type="ECO:0000255" key="2">
    <source>
        <dbReference type="PROSITE-ProRule" id="PRU01228"/>
    </source>
</evidence>
<protein>
    <recommendedName>
        <fullName evidence="1">Threonine--tRNA ligase</fullName>
        <ecNumber evidence="1">6.1.1.3</ecNumber>
    </recommendedName>
    <alternativeName>
        <fullName evidence="1">Threonyl-tRNA synthetase</fullName>
        <shortName evidence="1">ThrRS</shortName>
    </alternativeName>
</protein>
<feature type="chain" id="PRO_0000100975" description="Threonine--tRNA ligase">
    <location>
        <begin position="1"/>
        <end position="642"/>
    </location>
</feature>
<feature type="domain" description="TGS" evidence="2">
    <location>
        <begin position="1"/>
        <end position="61"/>
    </location>
</feature>
<feature type="region of interest" description="Catalytic" evidence="1">
    <location>
        <begin position="243"/>
        <end position="534"/>
    </location>
</feature>
<feature type="binding site" evidence="1">
    <location>
        <position position="334"/>
    </location>
    <ligand>
        <name>Zn(2+)</name>
        <dbReference type="ChEBI" id="CHEBI:29105"/>
    </ligand>
</feature>
<feature type="binding site" evidence="1">
    <location>
        <position position="385"/>
    </location>
    <ligand>
        <name>Zn(2+)</name>
        <dbReference type="ChEBI" id="CHEBI:29105"/>
    </ligand>
</feature>
<feature type="binding site" evidence="1">
    <location>
        <position position="511"/>
    </location>
    <ligand>
        <name>Zn(2+)</name>
        <dbReference type="ChEBI" id="CHEBI:29105"/>
    </ligand>
</feature>
<feature type="modified residue" description="N6-acetyllysine" evidence="1">
    <location>
        <position position="286"/>
    </location>
</feature>
<organism>
    <name type="scientific">Escherichia coli O157:H7</name>
    <dbReference type="NCBI Taxonomy" id="83334"/>
    <lineage>
        <taxon>Bacteria</taxon>
        <taxon>Pseudomonadati</taxon>
        <taxon>Pseudomonadota</taxon>
        <taxon>Gammaproteobacteria</taxon>
        <taxon>Enterobacterales</taxon>
        <taxon>Enterobacteriaceae</taxon>
        <taxon>Escherichia</taxon>
    </lineage>
</organism>
<dbReference type="EC" id="6.1.1.3" evidence="1"/>
<dbReference type="EMBL" id="AE005174">
    <property type="protein sequence ID" value="AAG56706.1"/>
    <property type="molecule type" value="Genomic_DNA"/>
</dbReference>
<dbReference type="EMBL" id="BA000007">
    <property type="protein sequence ID" value="BAB35849.1"/>
    <property type="molecule type" value="Genomic_DNA"/>
</dbReference>
<dbReference type="PIR" id="B90932">
    <property type="entry name" value="B90932"/>
</dbReference>
<dbReference type="PIR" id="F85780">
    <property type="entry name" value="F85780"/>
</dbReference>
<dbReference type="RefSeq" id="NP_310453.1">
    <property type="nucleotide sequence ID" value="NC_002695.1"/>
</dbReference>
<dbReference type="RefSeq" id="WP_001144201.1">
    <property type="nucleotide sequence ID" value="NZ_VOAI01000007.1"/>
</dbReference>
<dbReference type="SMR" id="Q8XE27"/>
<dbReference type="STRING" id="155864.Z2748"/>
<dbReference type="GeneID" id="912923"/>
<dbReference type="KEGG" id="ece:Z2748"/>
<dbReference type="KEGG" id="ecs:ECs_2426"/>
<dbReference type="PATRIC" id="fig|386585.9.peg.2539"/>
<dbReference type="eggNOG" id="COG0441">
    <property type="taxonomic scope" value="Bacteria"/>
</dbReference>
<dbReference type="HOGENOM" id="CLU_008554_0_1_6"/>
<dbReference type="OMA" id="WYADGMY"/>
<dbReference type="SABIO-RK" id="Q8XE27"/>
<dbReference type="Proteomes" id="UP000000558">
    <property type="component" value="Chromosome"/>
</dbReference>
<dbReference type="Proteomes" id="UP000002519">
    <property type="component" value="Chromosome"/>
</dbReference>
<dbReference type="GO" id="GO:0005829">
    <property type="term" value="C:cytosol"/>
    <property type="evidence" value="ECO:0007669"/>
    <property type="project" value="TreeGrafter"/>
</dbReference>
<dbReference type="GO" id="GO:0005524">
    <property type="term" value="F:ATP binding"/>
    <property type="evidence" value="ECO:0007669"/>
    <property type="project" value="UniProtKB-UniRule"/>
</dbReference>
<dbReference type="GO" id="GO:0046872">
    <property type="term" value="F:metal ion binding"/>
    <property type="evidence" value="ECO:0007669"/>
    <property type="project" value="UniProtKB-KW"/>
</dbReference>
<dbReference type="GO" id="GO:0004829">
    <property type="term" value="F:threonine-tRNA ligase activity"/>
    <property type="evidence" value="ECO:0007669"/>
    <property type="project" value="UniProtKB-UniRule"/>
</dbReference>
<dbReference type="GO" id="GO:0000049">
    <property type="term" value="F:tRNA binding"/>
    <property type="evidence" value="ECO:0007669"/>
    <property type="project" value="UniProtKB-KW"/>
</dbReference>
<dbReference type="GO" id="GO:0006435">
    <property type="term" value="P:threonyl-tRNA aminoacylation"/>
    <property type="evidence" value="ECO:0007669"/>
    <property type="project" value="UniProtKB-UniRule"/>
</dbReference>
<dbReference type="CDD" id="cd01667">
    <property type="entry name" value="TGS_ThrRS"/>
    <property type="match status" value="1"/>
</dbReference>
<dbReference type="CDD" id="cd00860">
    <property type="entry name" value="ThrRS_anticodon"/>
    <property type="match status" value="1"/>
</dbReference>
<dbReference type="CDD" id="cd00771">
    <property type="entry name" value="ThrRS_core"/>
    <property type="match status" value="1"/>
</dbReference>
<dbReference type="FunFam" id="3.10.20.30:FF:000005">
    <property type="entry name" value="Threonine--tRNA ligase"/>
    <property type="match status" value="1"/>
</dbReference>
<dbReference type="FunFam" id="3.30.54.20:FF:000002">
    <property type="entry name" value="Threonine--tRNA ligase"/>
    <property type="match status" value="1"/>
</dbReference>
<dbReference type="FunFam" id="3.30.930.10:FF:000002">
    <property type="entry name" value="Threonine--tRNA ligase"/>
    <property type="match status" value="1"/>
</dbReference>
<dbReference type="FunFam" id="3.40.50.800:FF:000001">
    <property type="entry name" value="Threonine--tRNA ligase"/>
    <property type="match status" value="1"/>
</dbReference>
<dbReference type="FunFam" id="3.30.980.10:FF:000005">
    <property type="entry name" value="Threonyl-tRNA synthetase, mitochondrial"/>
    <property type="match status" value="1"/>
</dbReference>
<dbReference type="Gene3D" id="3.10.20.30">
    <property type="match status" value="1"/>
</dbReference>
<dbReference type="Gene3D" id="3.30.54.20">
    <property type="match status" value="1"/>
</dbReference>
<dbReference type="Gene3D" id="3.40.50.800">
    <property type="entry name" value="Anticodon-binding domain"/>
    <property type="match status" value="1"/>
</dbReference>
<dbReference type="Gene3D" id="3.30.930.10">
    <property type="entry name" value="Bira Bifunctional Protein, Domain 2"/>
    <property type="match status" value="1"/>
</dbReference>
<dbReference type="Gene3D" id="3.30.980.10">
    <property type="entry name" value="Threonyl-trna Synthetase, Chain A, domain 2"/>
    <property type="match status" value="1"/>
</dbReference>
<dbReference type="HAMAP" id="MF_00184">
    <property type="entry name" value="Thr_tRNA_synth"/>
    <property type="match status" value="1"/>
</dbReference>
<dbReference type="InterPro" id="IPR002314">
    <property type="entry name" value="aa-tRNA-synt_IIb"/>
</dbReference>
<dbReference type="InterPro" id="IPR006195">
    <property type="entry name" value="aa-tRNA-synth_II"/>
</dbReference>
<dbReference type="InterPro" id="IPR045864">
    <property type="entry name" value="aa-tRNA-synth_II/BPL/LPL"/>
</dbReference>
<dbReference type="InterPro" id="IPR004154">
    <property type="entry name" value="Anticodon-bd"/>
</dbReference>
<dbReference type="InterPro" id="IPR036621">
    <property type="entry name" value="Anticodon-bd_dom_sf"/>
</dbReference>
<dbReference type="InterPro" id="IPR012675">
    <property type="entry name" value="Beta-grasp_dom_sf"/>
</dbReference>
<dbReference type="InterPro" id="IPR004095">
    <property type="entry name" value="TGS"/>
</dbReference>
<dbReference type="InterPro" id="IPR012676">
    <property type="entry name" value="TGS-like"/>
</dbReference>
<dbReference type="InterPro" id="IPR002320">
    <property type="entry name" value="Thr-tRNA-ligase_IIa"/>
</dbReference>
<dbReference type="InterPro" id="IPR018163">
    <property type="entry name" value="Thr/Ala-tRNA-synth_IIc_edit"/>
</dbReference>
<dbReference type="InterPro" id="IPR047246">
    <property type="entry name" value="ThrRS_anticodon"/>
</dbReference>
<dbReference type="InterPro" id="IPR033728">
    <property type="entry name" value="ThrRS_core"/>
</dbReference>
<dbReference type="InterPro" id="IPR012947">
    <property type="entry name" value="tRNA_SAD"/>
</dbReference>
<dbReference type="NCBIfam" id="TIGR00418">
    <property type="entry name" value="thrS"/>
    <property type="match status" value="1"/>
</dbReference>
<dbReference type="PANTHER" id="PTHR11451:SF44">
    <property type="entry name" value="THREONINE--TRNA LIGASE, CHLOROPLASTIC_MITOCHONDRIAL 2"/>
    <property type="match status" value="1"/>
</dbReference>
<dbReference type="PANTHER" id="PTHR11451">
    <property type="entry name" value="THREONINE-TRNA LIGASE"/>
    <property type="match status" value="1"/>
</dbReference>
<dbReference type="Pfam" id="PF03129">
    <property type="entry name" value="HGTP_anticodon"/>
    <property type="match status" value="1"/>
</dbReference>
<dbReference type="Pfam" id="PF02824">
    <property type="entry name" value="TGS"/>
    <property type="match status" value="1"/>
</dbReference>
<dbReference type="Pfam" id="PF00587">
    <property type="entry name" value="tRNA-synt_2b"/>
    <property type="match status" value="1"/>
</dbReference>
<dbReference type="Pfam" id="PF07973">
    <property type="entry name" value="tRNA_SAD"/>
    <property type="match status" value="1"/>
</dbReference>
<dbReference type="PRINTS" id="PR01047">
    <property type="entry name" value="TRNASYNTHTHR"/>
</dbReference>
<dbReference type="SMART" id="SM00863">
    <property type="entry name" value="tRNA_SAD"/>
    <property type="match status" value="1"/>
</dbReference>
<dbReference type="SUPFAM" id="SSF52954">
    <property type="entry name" value="Class II aaRS ABD-related"/>
    <property type="match status" value="1"/>
</dbReference>
<dbReference type="SUPFAM" id="SSF55681">
    <property type="entry name" value="Class II aaRS and biotin synthetases"/>
    <property type="match status" value="1"/>
</dbReference>
<dbReference type="SUPFAM" id="SSF81271">
    <property type="entry name" value="TGS-like"/>
    <property type="match status" value="1"/>
</dbReference>
<dbReference type="SUPFAM" id="SSF55186">
    <property type="entry name" value="ThrRS/AlaRS common domain"/>
    <property type="match status" value="1"/>
</dbReference>
<dbReference type="PROSITE" id="PS50862">
    <property type="entry name" value="AA_TRNA_LIGASE_II"/>
    <property type="match status" value="1"/>
</dbReference>
<dbReference type="PROSITE" id="PS51880">
    <property type="entry name" value="TGS"/>
    <property type="match status" value="1"/>
</dbReference>
<accession>Q8XE27</accession>
<reference key="1">
    <citation type="journal article" date="2001" name="Nature">
        <title>Genome sequence of enterohaemorrhagic Escherichia coli O157:H7.</title>
        <authorList>
            <person name="Perna N.T."/>
            <person name="Plunkett G. III"/>
            <person name="Burland V."/>
            <person name="Mau B."/>
            <person name="Glasner J.D."/>
            <person name="Rose D.J."/>
            <person name="Mayhew G.F."/>
            <person name="Evans P.S."/>
            <person name="Gregor J."/>
            <person name="Kirkpatrick H.A."/>
            <person name="Posfai G."/>
            <person name="Hackett J."/>
            <person name="Klink S."/>
            <person name="Boutin A."/>
            <person name="Shao Y."/>
            <person name="Miller L."/>
            <person name="Grotbeck E.J."/>
            <person name="Davis N.W."/>
            <person name="Lim A."/>
            <person name="Dimalanta E.T."/>
            <person name="Potamousis K."/>
            <person name="Apodaca J."/>
            <person name="Anantharaman T.S."/>
            <person name="Lin J."/>
            <person name="Yen G."/>
            <person name="Schwartz D.C."/>
            <person name="Welch R.A."/>
            <person name="Blattner F.R."/>
        </authorList>
    </citation>
    <scope>NUCLEOTIDE SEQUENCE [LARGE SCALE GENOMIC DNA]</scope>
    <source>
        <strain>O157:H7 / EDL933 / ATCC 700927 / EHEC</strain>
    </source>
</reference>
<reference key="2">
    <citation type="journal article" date="2001" name="DNA Res.">
        <title>Complete genome sequence of enterohemorrhagic Escherichia coli O157:H7 and genomic comparison with a laboratory strain K-12.</title>
        <authorList>
            <person name="Hayashi T."/>
            <person name="Makino K."/>
            <person name="Ohnishi M."/>
            <person name="Kurokawa K."/>
            <person name="Ishii K."/>
            <person name="Yokoyama K."/>
            <person name="Han C.-G."/>
            <person name="Ohtsubo E."/>
            <person name="Nakayama K."/>
            <person name="Murata T."/>
            <person name="Tanaka M."/>
            <person name="Tobe T."/>
            <person name="Iida T."/>
            <person name="Takami H."/>
            <person name="Honda T."/>
            <person name="Sasakawa C."/>
            <person name="Ogasawara N."/>
            <person name="Yasunaga T."/>
            <person name="Kuhara S."/>
            <person name="Shiba T."/>
            <person name="Hattori M."/>
            <person name="Shinagawa H."/>
        </authorList>
    </citation>
    <scope>NUCLEOTIDE SEQUENCE [LARGE SCALE GENOMIC DNA]</scope>
    <source>
        <strain>O157:H7 / Sakai / RIMD 0509952 / EHEC</strain>
    </source>
</reference>
<proteinExistence type="inferred from homology"/>
<keyword id="KW-0007">Acetylation</keyword>
<keyword id="KW-0030">Aminoacyl-tRNA synthetase</keyword>
<keyword id="KW-0067">ATP-binding</keyword>
<keyword id="KW-0963">Cytoplasm</keyword>
<keyword id="KW-0436">Ligase</keyword>
<keyword id="KW-0479">Metal-binding</keyword>
<keyword id="KW-0547">Nucleotide-binding</keyword>
<keyword id="KW-0648">Protein biosynthesis</keyword>
<keyword id="KW-1185">Reference proteome</keyword>
<keyword id="KW-0694">RNA-binding</keyword>
<keyword id="KW-0820">tRNA-binding</keyword>
<keyword id="KW-0862">Zinc</keyword>